<proteinExistence type="inferred from homology"/>
<reference key="1">
    <citation type="journal article" date="2009" name="Stand. Genomic Sci.">
        <title>Complete genome sequence of Beutenbergia cavernae type strain (HKI 0122).</title>
        <authorList>
            <person name="Land M."/>
            <person name="Pukall R."/>
            <person name="Abt B."/>
            <person name="Goker M."/>
            <person name="Rohde M."/>
            <person name="Glavina Del Rio T."/>
            <person name="Tice H."/>
            <person name="Copeland A."/>
            <person name="Cheng J.F."/>
            <person name="Lucas S."/>
            <person name="Chen F."/>
            <person name="Nolan M."/>
            <person name="Bruce D."/>
            <person name="Goodwin L."/>
            <person name="Pitluck S."/>
            <person name="Ivanova N."/>
            <person name="Mavromatis K."/>
            <person name="Ovchinnikova G."/>
            <person name="Pati A."/>
            <person name="Chen A."/>
            <person name="Palaniappan K."/>
            <person name="Hauser L."/>
            <person name="Chang Y.J."/>
            <person name="Jefferies C.C."/>
            <person name="Saunders E."/>
            <person name="Brettin T."/>
            <person name="Detter J.C."/>
            <person name="Han C."/>
            <person name="Chain P."/>
            <person name="Bristow J."/>
            <person name="Eisen J.A."/>
            <person name="Markowitz V."/>
            <person name="Hugenholtz P."/>
            <person name="Kyrpides N.C."/>
            <person name="Klenk H.P."/>
            <person name="Lapidus A."/>
        </authorList>
    </citation>
    <scope>NUCLEOTIDE SEQUENCE [LARGE SCALE GENOMIC DNA]</scope>
    <source>
        <strain>ATCC BAA-8 / DSM 12333 / CCUG 43141 / JCM 11478 / NBRC 16432 / NCIMB 13614 / HKI 0122</strain>
    </source>
</reference>
<keyword id="KW-0963">Cytoplasm</keyword>
<keyword id="KW-0227">DNA damage</keyword>
<keyword id="KW-0233">DNA recombination</keyword>
<keyword id="KW-0234">DNA repair</keyword>
<keyword id="KW-0238">DNA-binding</keyword>
<keyword id="KW-1185">Reference proteome</keyword>
<accession>C5C5Q7</accession>
<evidence type="ECO:0000255" key="1">
    <source>
        <dbReference type="HAMAP-Rule" id="MF_00031"/>
    </source>
</evidence>
<organism>
    <name type="scientific">Beutenbergia cavernae (strain ATCC BAA-8 / DSM 12333 / CCUG 43141 / JCM 11478 / NBRC 16432 / NCIMB 13614 / HKI 0122)</name>
    <dbReference type="NCBI Taxonomy" id="471853"/>
    <lineage>
        <taxon>Bacteria</taxon>
        <taxon>Bacillati</taxon>
        <taxon>Actinomycetota</taxon>
        <taxon>Actinomycetes</taxon>
        <taxon>Micrococcales</taxon>
        <taxon>Beutenbergiaceae</taxon>
        <taxon>Beutenbergia</taxon>
    </lineage>
</organism>
<feature type="chain" id="PRO_1000201982" description="Holliday junction branch migration complex subunit RuvA">
    <location>
        <begin position="1"/>
        <end position="200"/>
    </location>
</feature>
<feature type="region of interest" description="Domain I" evidence="1">
    <location>
        <begin position="1"/>
        <end position="63"/>
    </location>
</feature>
<feature type="region of interest" description="Domain II" evidence="1">
    <location>
        <begin position="64"/>
        <end position="138"/>
    </location>
</feature>
<feature type="region of interest" description="Flexible linker" evidence="1">
    <location>
        <begin position="138"/>
        <end position="142"/>
    </location>
</feature>
<feature type="region of interest" description="Domain III" evidence="1">
    <location>
        <begin position="143"/>
        <end position="200"/>
    </location>
</feature>
<protein>
    <recommendedName>
        <fullName evidence="1">Holliday junction branch migration complex subunit RuvA</fullName>
    </recommendedName>
</protein>
<name>RUVA_BEUC1</name>
<gene>
    <name evidence="1" type="primary">ruvA</name>
    <name type="ordered locus">Bcav_1993</name>
</gene>
<dbReference type="EMBL" id="CP001618">
    <property type="protein sequence ID" value="ACQ80248.1"/>
    <property type="molecule type" value="Genomic_DNA"/>
</dbReference>
<dbReference type="RefSeq" id="WP_015882488.1">
    <property type="nucleotide sequence ID" value="NC_012669.1"/>
</dbReference>
<dbReference type="SMR" id="C5C5Q7"/>
<dbReference type="STRING" id="471853.Bcav_1993"/>
<dbReference type="KEGG" id="bcv:Bcav_1993"/>
<dbReference type="eggNOG" id="COG0632">
    <property type="taxonomic scope" value="Bacteria"/>
</dbReference>
<dbReference type="HOGENOM" id="CLU_087936_2_1_11"/>
<dbReference type="OrthoDB" id="5293449at2"/>
<dbReference type="Proteomes" id="UP000007962">
    <property type="component" value="Chromosome"/>
</dbReference>
<dbReference type="GO" id="GO:0005737">
    <property type="term" value="C:cytoplasm"/>
    <property type="evidence" value="ECO:0007669"/>
    <property type="project" value="UniProtKB-SubCell"/>
</dbReference>
<dbReference type="GO" id="GO:0009379">
    <property type="term" value="C:Holliday junction helicase complex"/>
    <property type="evidence" value="ECO:0007669"/>
    <property type="project" value="InterPro"/>
</dbReference>
<dbReference type="GO" id="GO:0048476">
    <property type="term" value="C:Holliday junction resolvase complex"/>
    <property type="evidence" value="ECO:0007669"/>
    <property type="project" value="UniProtKB-UniRule"/>
</dbReference>
<dbReference type="GO" id="GO:0005524">
    <property type="term" value="F:ATP binding"/>
    <property type="evidence" value="ECO:0007669"/>
    <property type="project" value="InterPro"/>
</dbReference>
<dbReference type="GO" id="GO:0000400">
    <property type="term" value="F:four-way junction DNA binding"/>
    <property type="evidence" value="ECO:0007669"/>
    <property type="project" value="UniProtKB-UniRule"/>
</dbReference>
<dbReference type="GO" id="GO:0009378">
    <property type="term" value="F:four-way junction helicase activity"/>
    <property type="evidence" value="ECO:0007669"/>
    <property type="project" value="InterPro"/>
</dbReference>
<dbReference type="GO" id="GO:0006310">
    <property type="term" value="P:DNA recombination"/>
    <property type="evidence" value="ECO:0007669"/>
    <property type="project" value="UniProtKB-UniRule"/>
</dbReference>
<dbReference type="GO" id="GO:0006281">
    <property type="term" value="P:DNA repair"/>
    <property type="evidence" value="ECO:0007669"/>
    <property type="project" value="UniProtKB-UniRule"/>
</dbReference>
<dbReference type="CDD" id="cd14332">
    <property type="entry name" value="UBA_RuvA_C"/>
    <property type="match status" value="1"/>
</dbReference>
<dbReference type="Gene3D" id="1.10.150.20">
    <property type="entry name" value="5' to 3' exonuclease, C-terminal subdomain"/>
    <property type="match status" value="1"/>
</dbReference>
<dbReference type="Gene3D" id="1.10.8.10">
    <property type="entry name" value="DNA helicase RuvA subunit, C-terminal domain"/>
    <property type="match status" value="1"/>
</dbReference>
<dbReference type="Gene3D" id="2.40.50.140">
    <property type="entry name" value="Nucleic acid-binding proteins"/>
    <property type="match status" value="1"/>
</dbReference>
<dbReference type="HAMAP" id="MF_00031">
    <property type="entry name" value="DNA_HJ_migration_RuvA"/>
    <property type="match status" value="1"/>
</dbReference>
<dbReference type="InterPro" id="IPR013849">
    <property type="entry name" value="DNA_helicase_Holl-junc_RuvA_I"/>
</dbReference>
<dbReference type="InterPro" id="IPR003583">
    <property type="entry name" value="Hlx-hairpin-Hlx_DNA-bd_motif"/>
</dbReference>
<dbReference type="InterPro" id="IPR012340">
    <property type="entry name" value="NA-bd_OB-fold"/>
</dbReference>
<dbReference type="InterPro" id="IPR000085">
    <property type="entry name" value="RuvA"/>
</dbReference>
<dbReference type="InterPro" id="IPR010994">
    <property type="entry name" value="RuvA_2-like"/>
</dbReference>
<dbReference type="InterPro" id="IPR011114">
    <property type="entry name" value="RuvA_C"/>
</dbReference>
<dbReference type="InterPro" id="IPR036267">
    <property type="entry name" value="RuvA_C_sf"/>
</dbReference>
<dbReference type="NCBIfam" id="TIGR00084">
    <property type="entry name" value="ruvA"/>
    <property type="match status" value="1"/>
</dbReference>
<dbReference type="Pfam" id="PF14520">
    <property type="entry name" value="HHH_5"/>
    <property type="match status" value="1"/>
</dbReference>
<dbReference type="Pfam" id="PF07499">
    <property type="entry name" value="RuvA_C"/>
    <property type="match status" value="1"/>
</dbReference>
<dbReference type="Pfam" id="PF01330">
    <property type="entry name" value="RuvA_N"/>
    <property type="match status" value="1"/>
</dbReference>
<dbReference type="SMART" id="SM00278">
    <property type="entry name" value="HhH1"/>
    <property type="match status" value="2"/>
</dbReference>
<dbReference type="SUPFAM" id="SSF46929">
    <property type="entry name" value="DNA helicase RuvA subunit, C-terminal domain"/>
    <property type="match status" value="1"/>
</dbReference>
<dbReference type="SUPFAM" id="SSF50249">
    <property type="entry name" value="Nucleic acid-binding proteins"/>
    <property type="match status" value="1"/>
</dbReference>
<dbReference type="SUPFAM" id="SSF47781">
    <property type="entry name" value="RuvA domain 2-like"/>
    <property type="match status" value="1"/>
</dbReference>
<comment type="function">
    <text evidence="1">The RuvA-RuvB-RuvC complex processes Holliday junction (HJ) DNA during genetic recombination and DNA repair, while the RuvA-RuvB complex plays an important role in the rescue of blocked DNA replication forks via replication fork reversal (RFR). RuvA specifically binds to HJ cruciform DNA, conferring on it an open structure. The RuvB hexamer acts as an ATP-dependent pump, pulling dsDNA into and through the RuvAB complex. HJ branch migration allows RuvC to scan DNA until it finds its consensus sequence, where it cleaves and resolves the cruciform DNA.</text>
</comment>
<comment type="subunit">
    <text evidence="1">Homotetramer. Forms an RuvA(8)-RuvB(12)-Holliday junction (HJ) complex. HJ DNA is sandwiched between 2 RuvA tetramers; dsDNA enters through RuvA and exits via RuvB. An RuvB hexamer assembles on each DNA strand where it exits the tetramer. Each RuvB hexamer is contacted by two RuvA subunits (via domain III) on 2 adjacent RuvB subunits; this complex drives branch migration. In the full resolvosome a probable DNA-RuvA(4)-RuvB(12)-RuvC(2) complex forms which resolves the HJ.</text>
</comment>
<comment type="subcellular location">
    <subcellularLocation>
        <location evidence="1">Cytoplasm</location>
    </subcellularLocation>
</comment>
<comment type="domain">
    <text evidence="1">Has three domains with a flexible linker between the domains II and III and assumes an 'L' shape. Domain III is highly mobile and contacts RuvB.</text>
</comment>
<comment type="similarity">
    <text evidence="1">Belongs to the RuvA family.</text>
</comment>
<sequence length="200" mass="20288">MIALVQGRVAAIGLDAVVVVVGGVGMRVLATPATLAGLRVEADCELHTSLVVREDSLTLFGFADADERDVFELVQTVSGVGPRLALAMLAVHTPDGLRRAVAQEDLAALVRVPGIGRKGASRIVLELGDRLGPAQGAAPAAPVAVDDGADVVDALVGLGWPVRQAQDAVRGVLEDADGTAPDAAGLLRAALRSLAGDARG</sequence>